<accession>Q0BM96</accession>
<protein>
    <recommendedName>
        <fullName evidence="1">tRNA-2-methylthio-N(6)-dimethylallyladenosine synthase</fullName>
        <ecNumber evidence="1">2.8.4.3</ecNumber>
    </recommendedName>
    <alternativeName>
        <fullName evidence="1">(Dimethylallyl)adenosine tRNA methylthiotransferase MiaB</fullName>
    </alternativeName>
    <alternativeName>
        <fullName evidence="1">tRNA-i(6)A37 methylthiotransferase</fullName>
    </alternativeName>
</protein>
<evidence type="ECO:0000255" key="1">
    <source>
        <dbReference type="HAMAP-Rule" id="MF_01864"/>
    </source>
</evidence>
<evidence type="ECO:0000255" key="2">
    <source>
        <dbReference type="PROSITE-ProRule" id="PRU01266"/>
    </source>
</evidence>
<sequence length="442" mass="50164">MKEQKKVFIKTLGCQMNEYDSARMHEVLNEHFDTVKTDDYKDADIILINTCSIREKAQEKVFHELGRWKGLKKTNEDLIIGVGGCVASQEGENIIKRAPFVDLVFGPQTIHRLPEMIKQKQKSQQSQVDISFPEVEKFDYLPEPKAEGAKAYVSIMEGCDKYCSYCVVPYTRGPEVNRPFEDVLAECAILAEQGVKEITLLGQNVNHYLGPMENGQTADLALLIHFIAEIDGIERIRFTTSHPVEFSQNLIDAYATVPELANHLHLPVQHGSDRILINMKRNHTILEFKQKIRKLRAIRPDITISSDFIVGFPGETEEDFQKLLDLVKEINFDQSFSFIYSKRPGTPAADLPDDTPMEVKKDRLKRLQDLLNSNAQIISRQMVGTNQRILVDGTSKKDDNILSGRTENNRVVNFKGDKSLIGQFAMVKITESLPNSLRGELI</sequence>
<organism>
    <name type="scientific">Francisella tularensis subsp. holarctica (strain OSU18)</name>
    <dbReference type="NCBI Taxonomy" id="393011"/>
    <lineage>
        <taxon>Bacteria</taxon>
        <taxon>Pseudomonadati</taxon>
        <taxon>Pseudomonadota</taxon>
        <taxon>Gammaproteobacteria</taxon>
        <taxon>Thiotrichales</taxon>
        <taxon>Francisellaceae</taxon>
        <taxon>Francisella</taxon>
    </lineage>
</organism>
<comment type="function">
    <text evidence="1">Catalyzes the methylthiolation of N6-(dimethylallyl)adenosine (i(6)A), leading to the formation of 2-methylthio-N6-(dimethylallyl)adenosine (ms(2)i(6)A) at position 37 in tRNAs that read codons beginning with uridine.</text>
</comment>
<comment type="catalytic activity">
    <reaction evidence="1">
        <text>N(6)-dimethylallyladenosine(37) in tRNA + (sulfur carrier)-SH + AH2 + 2 S-adenosyl-L-methionine = 2-methylsulfanyl-N(6)-dimethylallyladenosine(37) in tRNA + (sulfur carrier)-H + 5'-deoxyadenosine + L-methionine + A + S-adenosyl-L-homocysteine + 2 H(+)</text>
        <dbReference type="Rhea" id="RHEA:37067"/>
        <dbReference type="Rhea" id="RHEA-COMP:10375"/>
        <dbReference type="Rhea" id="RHEA-COMP:10376"/>
        <dbReference type="Rhea" id="RHEA-COMP:14737"/>
        <dbReference type="Rhea" id="RHEA-COMP:14739"/>
        <dbReference type="ChEBI" id="CHEBI:13193"/>
        <dbReference type="ChEBI" id="CHEBI:15378"/>
        <dbReference type="ChEBI" id="CHEBI:17319"/>
        <dbReference type="ChEBI" id="CHEBI:17499"/>
        <dbReference type="ChEBI" id="CHEBI:29917"/>
        <dbReference type="ChEBI" id="CHEBI:57844"/>
        <dbReference type="ChEBI" id="CHEBI:57856"/>
        <dbReference type="ChEBI" id="CHEBI:59789"/>
        <dbReference type="ChEBI" id="CHEBI:64428"/>
        <dbReference type="ChEBI" id="CHEBI:74415"/>
        <dbReference type="ChEBI" id="CHEBI:74417"/>
        <dbReference type="EC" id="2.8.4.3"/>
    </reaction>
</comment>
<comment type="cofactor">
    <cofactor evidence="1">
        <name>[4Fe-4S] cluster</name>
        <dbReference type="ChEBI" id="CHEBI:49883"/>
    </cofactor>
    <text evidence="1">Binds 2 [4Fe-4S] clusters. One cluster is coordinated with 3 cysteines and an exchangeable S-adenosyl-L-methionine.</text>
</comment>
<comment type="subunit">
    <text evidence="1">Monomer.</text>
</comment>
<comment type="subcellular location">
    <subcellularLocation>
        <location evidence="1">Cytoplasm</location>
    </subcellularLocation>
</comment>
<comment type="similarity">
    <text evidence="1">Belongs to the methylthiotransferase family. MiaB subfamily.</text>
</comment>
<reference key="1">
    <citation type="journal article" date="2006" name="J. Bacteriol.">
        <title>Chromosome rearrangement and diversification of Francisella tularensis revealed by the type B (OSU18) genome sequence.</title>
        <authorList>
            <person name="Petrosino J.F."/>
            <person name="Xiang Q."/>
            <person name="Karpathy S.E."/>
            <person name="Jiang H."/>
            <person name="Yerrapragada S."/>
            <person name="Liu Y."/>
            <person name="Gioia J."/>
            <person name="Hemphill L."/>
            <person name="Gonzalez A."/>
            <person name="Raghavan T.M."/>
            <person name="Uzman A."/>
            <person name="Fox G.E."/>
            <person name="Highlander S."/>
            <person name="Reichard M."/>
            <person name="Morton R.J."/>
            <person name="Clinkenbeard K.D."/>
            <person name="Weinstock G.M."/>
        </authorList>
    </citation>
    <scope>NUCLEOTIDE SEQUENCE [LARGE SCALE GENOMIC DNA]</scope>
    <source>
        <strain>OSU18</strain>
    </source>
</reference>
<feature type="chain" id="PRO_0000374305" description="tRNA-2-methylthio-N(6)-dimethylallyladenosine synthase">
    <location>
        <begin position="1"/>
        <end position="442"/>
    </location>
</feature>
<feature type="domain" description="MTTase N-terminal" evidence="1">
    <location>
        <begin position="5"/>
        <end position="122"/>
    </location>
</feature>
<feature type="domain" description="Radical SAM core" evidence="2">
    <location>
        <begin position="145"/>
        <end position="378"/>
    </location>
</feature>
<feature type="domain" description="TRAM" evidence="1">
    <location>
        <begin position="380"/>
        <end position="442"/>
    </location>
</feature>
<feature type="binding site" evidence="1">
    <location>
        <position position="14"/>
    </location>
    <ligand>
        <name>[4Fe-4S] cluster</name>
        <dbReference type="ChEBI" id="CHEBI:49883"/>
        <label>1</label>
    </ligand>
</feature>
<feature type="binding site" evidence="1">
    <location>
        <position position="51"/>
    </location>
    <ligand>
        <name>[4Fe-4S] cluster</name>
        <dbReference type="ChEBI" id="CHEBI:49883"/>
        <label>1</label>
    </ligand>
</feature>
<feature type="binding site" evidence="1">
    <location>
        <position position="85"/>
    </location>
    <ligand>
        <name>[4Fe-4S] cluster</name>
        <dbReference type="ChEBI" id="CHEBI:49883"/>
        <label>1</label>
    </ligand>
</feature>
<feature type="binding site" evidence="1">
    <location>
        <position position="159"/>
    </location>
    <ligand>
        <name>[4Fe-4S] cluster</name>
        <dbReference type="ChEBI" id="CHEBI:49883"/>
        <label>2</label>
        <note>4Fe-4S-S-AdoMet</note>
    </ligand>
</feature>
<feature type="binding site" evidence="1">
    <location>
        <position position="163"/>
    </location>
    <ligand>
        <name>[4Fe-4S] cluster</name>
        <dbReference type="ChEBI" id="CHEBI:49883"/>
        <label>2</label>
        <note>4Fe-4S-S-AdoMet</note>
    </ligand>
</feature>
<feature type="binding site" evidence="1">
    <location>
        <position position="166"/>
    </location>
    <ligand>
        <name>[4Fe-4S] cluster</name>
        <dbReference type="ChEBI" id="CHEBI:49883"/>
        <label>2</label>
        <note>4Fe-4S-S-AdoMet</note>
    </ligand>
</feature>
<keyword id="KW-0004">4Fe-4S</keyword>
<keyword id="KW-0963">Cytoplasm</keyword>
<keyword id="KW-0408">Iron</keyword>
<keyword id="KW-0411">Iron-sulfur</keyword>
<keyword id="KW-0479">Metal-binding</keyword>
<keyword id="KW-0949">S-adenosyl-L-methionine</keyword>
<keyword id="KW-0808">Transferase</keyword>
<keyword id="KW-0819">tRNA processing</keyword>
<name>MIAB_FRATO</name>
<gene>
    <name evidence="1" type="primary">miaB</name>
    <name type="ordered locus">FTH_0872</name>
</gene>
<dbReference type="EC" id="2.8.4.3" evidence="1"/>
<dbReference type="EMBL" id="CP000437">
    <property type="protein sequence ID" value="ABI82788.1"/>
    <property type="molecule type" value="Genomic_DNA"/>
</dbReference>
<dbReference type="RefSeq" id="WP_003018765.1">
    <property type="nucleotide sequence ID" value="NC_017463.1"/>
</dbReference>
<dbReference type="SMR" id="Q0BM96"/>
<dbReference type="KEGG" id="fth:FTH_0872"/>
<dbReference type="GO" id="GO:0005829">
    <property type="term" value="C:cytosol"/>
    <property type="evidence" value="ECO:0007669"/>
    <property type="project" value="TreeGrafter"/>
</dbReference>
<dbReference type="GO" id="GO:0051539">
    <property type="term" value="F:4 iron, 4 sulfur cluster binding"/>
    <property type="evidence" value="ECO:0007669"/>
    <property type="project" value="UniProtKB-UniRule"/>
</dbReference>
<dbReference type="GO" id="GO:0046872">
    <property type="term" value="F:metal ion binding"/>
    <property type="evidence" value="ECO:0007669"/>
    <property type="project" value="UniProtKB-KW"/>
</dbReference>
<dbReference type="GO" id="GO:0035597">
    <property type="term" value="F:N6-isopentenyladenosine methylthiotransferase activity"/>
    <property type="evidence" value="ECO:0007669"/>
    <property type="project" value="TreeGrafter"/>
</dbReference>
<dbReference type="CDD" id="cd01335">
    <property type="entry name" value="Radical_SAM"/>
    <property type="match status" value="1"/>
</dbReference>
<dbReference type="FunFam" id="3.40.50.12160:FF:000001">
    <property type="entry name" value="tRNA-2-methylthio-N(6)-dimethylallyladenosine synthase"/>
    <property type="match status" value="1"/>
</dbReference>
<dbReference type="FunFam" id="3.80.30.20:FF:000001">
    <property type="entry name" value="tRNA-2-methylthio-N(6)-dimethylallyladenosine synthase 2"/>
    <property type="match status" value="1"/>
</dbReference>
<dbReference type="Gene3D" id="3.40.50.12160">
    <property type="entry name" value="Methylthiotransferase, N-terminal domain"/>
    <property type="match status" value="1"/>
</dbReference>
<dbReference type="Gene3D" id="3.80.30.20">
    <property type="entry name" value="tm_1862 like domain"/>
    <property type="match status" value="1"/>
</dbReference>
<dbReference type="HAMAP" id="MF_01864">
    <property type="entry name" value="tRNA_metthiotr_MiaB"/>
    <property type="match status" value="1"/>
</dbReference>
<dbReference type="InterPro" id="IPR006638">
    <property type="entry name" value="Elp3/MiaA/NifB-like_rSAM"/>
</dbReference>
<dbReference type="InterPro" id="IPR005839">
    <property type="entry name" value="Methylthiotransferase"/>
</dbReference>
<dbReference type="InterPro" id="IPR020612">
    <property type="entry name" value="Methylthiotransferase_CS"/>
</dbReference>
<dbReference type="InterPro" id="IPR013848">
    <property type="entry name" value="Methylthiotransferase_N"/>
</dbReference>
<dbReference type="InterPro" id="IPR038135">
    <property type="entry name" value="Methylthiotransferase_N_sf"/>
</dbReference>
<dbReference type="InterPro" id="IPR006463">
    <property type="entry name" value="MiaB_methiolase"/>
</dbReference>
<dbReference type="InterPro" id="IPR007197">
    <property type="entry name" value="rSAM"/>
</dbReference>
<dbReference type="InterPro" id="IPR023404">
    <property type="entry name" value="rSAM_horseshoe"/>
</dbReference>
<dbReference type="InterPro" id="IPR002792">
    <property type="entry name" value="TRAM_dom"/>
</dbReference>
<dbReference type="NCBIfam" id="TIGR01574">
    <property type="entry name" value="miaB-methiolase"/>
    <property type="match status" value="1"/>
</dbReference>
<dbReference type="NCBIfam" id="TIGR00089">
    <property type="entry name" value="MiaB/RimO family radical SAM methylthiotransferase"/>
    <property type="match status" value="1"/>
</dbReference>
<dbReference type="PANTHER" id="PTHR43020">
    <property type="entry name" value="CDK5 REGULATORY SUBUNIT-ASSOCIATED PROTEIN 1"/>
    <property type="match status" value="1"/>
</dbReference>
<dbReference type="PANTHER" id="PTHR43020:SF2">
    <property type="entry name" value="MITOCHONDRIAL TRNA METHYLTHIOTRANSFERASE CDK5RAP1"/>
    <property type="match status" value="1"/>
</dbReference>
<dbReference type="Pfam" id="PF04055">
    <property type="entry name" value="Radical_SAM"/>
    <property type="match status" value="1"/>
</dbReference>
<dbReference type="Pfam" id="PF01938">
    <property type="entry name" value="TRAM"/>
    <property type="match status" value="1"/>
</dbReference>
<dbReference type="Pfam" id="PF00919">
    <property type="entry name" value="UPF0004"/>
    <property type="match status" value="1"/>
</dbReference>
<dbReference type="SFLD" id="SFLDF00273">
    <property type="entry name" value="(dimethylallyl)adenosine_tRNA"/>
    <property type="match status" value="1"/>
</dbReference>
<dbReference type="SFLD" id="SFLDG01082">
    <property type="entry name" value="B12-binding_domain_containing"/>
    <property type="match status" value="1"/>
</dbReference>
<dbReference type="SFLD" id="SFLDS00029">
    <property type="entry name" value="Radical_SAM"/>
    <property type="match status" value="1"/>
</dbReference>
<dbReference type="SMART" id="SM00729">
    <property type="entry name" value="Elp3"/>
    <property type="match status" value="1"/>
</dbReference>
<dbReference type="SUPFAM" id="SSF102114">
    <property type="entry name" value="Radical SAM enzymes"/>
    <property type="match status" value="1"/>
</dbReference>
<dbReference type="PROSITE" id="PS51449">
    <property type="entry name" value="MTTASE_N"/>
    <property type="match status" value="1"/>
</dbReference>
<dbReference type="PROSITE" id="PS01278">
    <property type="entry name" value="MTTASE_RADICAL"/>
    <property type="match status" value="1"/>
</dbReference>
<dbReference type="PROSITE" id="PS51918">
    <property type="entry name" value="RADICAL_SAM"/>
    <property type="match status" value="1"/>
</dbReference>
<dbReference type="PROSITE" id="PS50926">
    <property type="entry name" value="TRAM"/>
    <property type="match status" value="1"/>
</dbReference>
<proteinExistence type="inferred from homology"/>